<name>P5CR_STAAR</name>
<comment type="function">
    <text evidence="1">Catalyzes the reduction of 1-pyrroline-5-carboxylate (PCA) to L-proline.</text>
</comment>
<comment type="catalytic activity">
    <reaction evidence="1">
        <text>L-proline + NADP(+) = (S)-1-pyrroline-5-carboxylate + NADPH + 2 H(+)</text>
        <dbReference type="Rhea" id="RHEA:14109"/>
        <dbReference type="ChEBI" id="CHEBI:15378"/>
        <dbReference type="ChEBI" id="CHEBI:17388"/>
        <dbReference type="ChEBI" id="CHEBI:57783"/>
        <dbReference type="ChEBI" id="CHEBI:58349"/>
        <dbReference type="ChEBI" id="CHEBI:60039"/>
        <dbReference type="EC" id="1.5.1.2"/>
    </reaction>
</comment>
<comment type="catalytic activity">
    <reaction evidence="1">
        <text>L-proline + NAD(+) = (S)-1-pyrroline-5-carboxylate + NADH + 2 H(+)</text>
        <dbReference type="Rhea" id="RHEA:14105"/>
        <dbReference type="ChEBI" id="CHEBI:15378"/>
        <dbReference type="ChEBI" id="CHEBI:17388"/>
        <dbReference type="ChEBI" id="CHEBI:57540"/>
        <dbReference type="ChEBI" id="CHEBI:57945"/>
        <dbReference type="ChEBI" id="CHEBI:60039"/>
        <dbReference type="EC" id="1.5.1.2"/>
    </reaction>
</comment>
<comment type="pathway">
    <text evidence="1">Amino-acid biosynthesis; L-proline biosynthesis; L-proline from L-glutamate 5-semialdehyde: step 1/1.</text>
</comment>
<comment type="subcellular location">
    <subcellularLocation>
        <location evidence="1">Cytoplasm</location>
    </subcellularLocation>
</comment>
<comment type="similarity">
    <text evidence="1">Belongs to the pyrroline-5-carboxylate reductase family.</text>
</comment>
<evidence type="ECO:0000255" key="1">
    <source>
        <dbReference type="HAMAP-Rule" id="MF_01925"/>
    </source>
</evidence>
<protein>
    <recommendedName>
        <fullName evidence="1">Pyrroline-5-carboxylate reductase</fullName>
        <shortName evidence="1">P5C reductase</shortName>
        <shortName evidence="1">P5CR</shortName>
        <ecNumber evidence="1">1.5.1.2</ecNumber>
    </recommendedName>
    <alternativeName>
        <fullName evidence="1">PCA reductase</fullName>
    </alternativeName>
</protein>
<dbReference type="EC" id="1.5.1.2" evidence="1"/>
<dbReference type="EMBL" id="BX571856">
    <property type="protein sequence ID" value="CAG40575.1"/>
    <property type="molecule type" value="Genomic_DNA"/>
</dbReference>
<dbReference type="RefSeq" id="WP_000779748.1">
    <property type="nucleotide sequence ID" value="NC_002952.2"/>
</dbReference>
<dbReference type="SMR" id="Q6GGJ5"/>
<dbReference type="KEGG" id="sar:SAR1579"/>
<dbReference type="HOGENOM" id="CLU_042344_0_1_9"/>
<dbReference type="UniPathway" id="UPA00098">
    <property type="reaction ID" value="UER00361"/>
</dbReference>
<dbReference type="Proteomes" id="UP000000596">
    <property type="component" value="Chromosome"/>
</dbReference>
<dbReference type="GO" id="GO:0005737">
    <property type="term" value="C:cytoplasm"/>
    <property type="evidence" value="ECO:0007669"/>
    <property type="project" value="UniProtKB-SubCell"/>
</dbReference>
<dbReference type="GO" id="GO:0004735">
    <property type="term" value="F:pyrroline-5-carboxylate reductase activity"/>
    <property type="evidence" value="ECO:0007669"/>
    <property type="project" value="UniProtKB-UniRule"/>
</dbReference>
<dbReference type="GO" id="GO:0055129">
    <property type="term" value="P:L-proline biosynthetic process"/>
    <property type="evidence" value="ECO:0007669"/>
    <property type="project" value="UniProtKB-UniRule"/>
</dbReference>
<dbReference type="FunFam" id="1.10.3730.10:FF:000001">
    <property type="entry name" value="Pyrroline-5-carboxylate reductase"/>
    <property type="match status" value="1"/>
</dbReference>
<dbReference type="Gene3D" id="3.40.50.720">
    <property type="entry name" value="NAD(P)-binding Rossmann-like Domain"/>
    <property type="match status" value="1"/>
</dbReference>
<dbReference type="Gene3D" id="1.10.3730.10">
    <property type="entry name" value="ProC C-terminal domain-like"/>
    <property type="match status" value="1"/>
</dbReference>
<dbReference type="HAMAP" id="MF_01925">
    <property type="entry name" value="P5C_reductase"/>
    <property type="match status" value="1"/>
</dbReference>
<dbReference type="InterPro" id="IPR008927">
    <property type="entry name" value="6-PGluconate_DH-like_C_sf"/>
</dbReference>
<dbReference type="InterPro" id="IPR036291">
    <property type="entry name" value="NAD(P)-bd_dom_sf"/>
</dbReference>
<dbReference type="InterPro" id="IPR028939">
    <property type="entry name" value="P5C_Rdtase_cat_N"/>
</dbReference>
<dbReference type="InterPro" id="IPR029036">
    <property type="entry name" value="P5CR_dimer"/>
</dbReference>
<dbReference type="InterPro" id="IPR000304">
    <property type="entry name" value="Pyrroline-COOH_reductase"/>
</dbReference>
<dbReference type="NCBIfam" id="TIGR00112">
    <property type="entry name" value="proC"/>
    <property type="match status" value="1"/>
</dbReference>
<dbReference type="PANTHER" id="PTHR11645">
    <property type="entry name" value="PYRROLINE-5-CARBOXYLATE REDUCTASE"/>
    <property type="match status" value="1"/>
</dbReference>
<dbReference type="PANTHER" id="PTHR11645:SF0">
    <property type="entry name" value="PYRROLINE-5-CARBOXYLATE REDUCTASE 3"/>
    <property type="match status" value="1"/>
</dbReference>
<dbReference type="Pfam" id="PF03807">
    <property type="entry name" value="F420_oxidored"/>
    <property type="match status" value="1"/>
</dbReference>
<dbReference type="Pfam" id="PF14748">
    <property type="entry name" value="P5CR_dimer"/>
    <property type="match status" value="1"/>
</dbReference>
<dbReference type="PIRSF" id="PIRSF000193">
    <property type="entry name" value="Pyrrol-5-carb_rd"/>
    <property type="match status" value="1"/>
</dbReference>
<dbReference type="SUPFAM" id="SSF48179">
    <property type="entry name" value="6-phosphogluconate dehydrogenase C-terminal domain-like"/>
    <property type="match status" value="1"/>
</dbReference>
<dbReference type="SUPFAM" id="SSF51735">
    <property type="entry name" value="NAD(P)-binding Rossmann-fold domains"/>
    <property type="match status" value="1"/>
</dbReference>
<accession>Q6GGJ5</accession>
<reference key="1">
    <citation type="journal article" date="2004" name="Proc. Natl. Acad. Sci. U.S.A.">
        <title>Complete genomes of two clinical Staphylococcus aureus strains: evidence for the rapid evolution of virulence and drug resistance.</title>
        <authorList>
            <person name="Holden M.T.G."/>
            <person name="Feil E.J."/>
            <person name="Lindsay J.A."/>
            <person name="Peacock S.J."/>
            <person name="Day N.P.J."/>
            <person name="Enright M.C."/>
            <person name="Foster T.J."/>
            <person name="Moore C.E."/>
            <person name="Hurst L."/>
            <person name="Atkin R."/>
            <person name="Barron A."/>
            <person name="Bason N."/>
            <person name="Bentley S.D."/>
            <person name="Chillingworth C."/>
            <person name="Chillingworth T."/>
            <person name="Churcher C."/>
            <person name="Clark L."/>
            <person name="Corton C."/>
            <person name="Cronin A."/>
            <person name="Doggett J."/>
            <person name="Dowd L."/>
            <person name="Feltwell T."/>
            <person name="Hance Z."/>
            <person name="Harris B."/>
            <person name="Hauser H."/>
            <person name="Holroyd S."/>
            <person name="Jagels K."/>
            <person name="James K.D."/>
            <person name="Lennard N."/>
            <person name="Line A."/>
            <person name="Mayes R."/>
            <person name="Moule S."/>
            <person name="Mungall K."/>
            <person name="Ormond D."/>
            <person name="Quail M.A."/>
            <person name="Rabbinowitsch E."/>
            <person name="Rutherford K.M."/>
            <person name="Sanders M."/>
            <person name="Sharp S."/>
            <person name="Simmonds M."/>
            <person name="Stevens K."/>
            <person name="Whitehead S."/>
            <person name="Barrell B.G."/>
            <person name="Spratt B.G."/>
            <person name="Parkhill J."/>
        </authorList>
    </citation>
    <scope>NUCLEOTIDE SEQUENCE [LARGE SCALE GENOMIC DNA]</scope>
    <source>
        <strain>MRSA252</strain>
    </source>
</reference>
<keyword id="KW-0028">Amino-acid biosynthesis</keyword>
<keyword id="KW-0963">Cytoplasm</keyword>
<keyword id="KW-0521">NADP</keyword>
<keyword id="KW-0560">Oxidoreductase</keyword>
<keyword id="KW-0641">Proline biosynthesis</keyword>
<organism>
    <name type="scientific">Staphylococcus aureus (strain MRSA252)</name>
    <dbReference type="NCBI Taxonomy" id="282458"/>
    <lineage>
        <taxon>Bacteria</taxon>
        <taxon>Bacillati</taxon>
        <taxon>Bacillota</taxon>
        <taxon>Bacilli</taxon>
        <taxon>Bacillales</taxon>
        <taxon>Staphylococcaceae</taxon>
        <taxon>Staphylococcus</taxon>
    </lineage>
</organism>
<sequence length="271" mass="29840">MKLVFYGAGNMAQAIFTGIINSSNLDANDIYLTNKSNEQALKAFAEKLGVNYSYDDATLLKDADYVFLGTKPHDFDALATRIKPHITKDNCFISIMAGIPIDYIKQQLECQNPVARIMPNTNAQVGHSVTGISFSNNFDPKSKDEINDLVKAFGSVIEVSEDHLHQVTAITGSGPAFLYHVFEQYVKAGTKLGLEKEQVEESIRNLIIGTSKMIERSDLSMAQLRKNITSKGGTTQAGLDTLSQYDLVSIFEDCLNAAVDRSIELSNIEDQ</sequence>
<gene>
    <name evidence="1" type="primary">proC</name>
    <name type="ordered locus">SAR1579</name>
</gene>
<feature type="chain" id="PRO_0000187301" description="Pyrroline-5-carboxylate reductase">
    <location>
        <begin position="1"/>
        <end position="271"/>
    </location>
</feature>
<proteinExistence type="inferred from homology"/>